<gene>
    <name evidence="48" type="primary">MPK6</name>
    <name evidence="50" type="ordered locus">At2g43790</name>
    <name evidence="51" type="ORF">F18O19.10</name>
</gene>
<accession>Q39026</accession>
<name>MPK6_ARATH</name>
<reference key="1">
    <citation type="journal article" date="1993" name="FEBS Lett.">
        <title>ATMPKs: a gene family of plant MAP kinases in Arabidopsis thaliana.</title>
        <authorList>
            <person name="Mizoguchi T."/>
            <person name="Hayashida N."/>
            <person name="Yamaguchi-Shinozaki K."/>
            <person name="Kamada H."/>
            <person name="Shinozaki K."/>
        </authorList>
    </citation>
    <scope>NUCLEOTIDE SEQUENCE [MRNA]</scope>
    <source>
        <strain>cv. Columbia</strain>
    </source>
</reference>
<reference key="2">
    <citation type="journal article" date="1999" name="Nature">
        <title>Sequence and analysis of chromosome 2 of the plant Arabidopsis thaliana.</title>
        <authorList>
            <person name="Lin X."/>
            <person name="Kaul S."/>
            <person name="Rounsley S.D."/>
            <person name="Shea T.P."/>
            <person name="Benito M.-I."/>
            <person name="Town C.D."/>
            <person name="Fujii C.Y."/>
            <person name="Mason T.M."/>
            <person name="Bowman C.L."/>
            <person name="Barnstead M.E."/>
            <person name="Feldblyum T.V."/>
            <person name="Buell C.R."/>
            <person name="Ketchum K.A."/>
            <person name="Lee J.J."/>
            <person name="Ronning C.M."/>
            <person name="Koo H.L."/>
            <person name="Moffat K.S."/>
            <person name="Cronin L.A."/>
            <person name="Shen M."/>
            <person name="Pai G."/>
            <person name="Van Aken S."/>
            <person name="Umayam L."/>
            <person name="Tallon L.J."/>
            <person name="Gill J.E."/>
            <person name="Adams M.D."/>
            <person name="Carrera A.J."/>
            <person name="Creasy T.H."/>
            <person name="Goodman H.M."/>
            <person name="Somerville C.R."/>
            <person name="Copenhaver G.P."/>
            <person name="Preuss D."/>
            <person name="Nierman W.C."/>
            <person name="White O."/>
            <person name="Eisen J.A."/>
            <person name="Salzberg S.L."/>
            <person name="Fraser C.M."/>
            <person name="Venter J.C."/>
        </authorList>
    </citation>
    <scope>NUCLEOTIDE SEQUENCE [LARGE SCALE GENOMIC DNA]</scope>
    <source>
        <strain>cv. Columbia</strain>
    </source>
</reference>
<reference key="3">
    <citation type="journal article" date="2017" name="Plant J.">
        <title>Araport11: a complete reannotation of the Arabidopsis thaliana reference genome.</title>
        <authorList>
            <person name="Cheng C.Y."/>
            <person name="Krishnakumar V."/>
            <person name="Chan A.P."/>
            <person name="Thibaud-Nissen F."/>
            <person name="Schobel S."/>
            <person name="Town C.D."/>
        </authorList>
    </citation>
    <scope>GENOME REANNOTATION</scope>
    <source>
        <strain>cv. Columbia</strain>
    </source>
</reference>
<reference key="4">
    <citation type="journal article" date="2003" name="Science">
        <title>Empirical analysis of transcriptional activity in the Arabidopsis genome.</title>
        <authorList>
            <person name="Yamada K."/>
            <person name="Lim J."/>
            <person name="Dale J.M."/>
            <person name="Chen H."/>
            <person name="Shinn P."/>
            <person name="Palm C.J."/>
            <person name="Southwick A.M."/>
            <person name="Wu H.C."/>
            <person name="Kim C.J."/>
            <person name="Nguyen M."/>
            <person name="Pham P.K."/>
            <person name="Cheuk R.F."/>
            <person name="Karlin-Newmann G."/>
            <person name="Liu S.X."/>
            <person name="Lam B."/>
            <person name="Sakano H."/>
            <person name="Wu T."/>
            <person name="Yu G."/>
            <person name="Miranda M."/>
            <person name="Quach H.L."/>
            <person name="Tripp M."/>
            <person name="Chang C.H."/>
            <person name="Lee J.M."/>
            <person name="Toriumi M.J."/>
            <person name="Chan M.M."/>
            <person name="Tang C.C."/>
            <person name="Onodera C.S."/>
            <person name="Deng J.M."/>
            <person name="Akiyama K."/>
            <person name="Ansari Y."/>
            <person name="Arakawa T."/>
            <person name="Banh J."/>
            <person name="Banno F."/>
            <person name="Bowser L."/>
            <person name="Brooks S.Y."/>
            <person name="Carninci P."/>
            <person name="Chao Q."/>
            <person name="Choy N."/>
            <person name="Enju A."/>
            <person name="Goldsmith A.D."/>
            <person name="Gurjal M."/>
            <person name="Hansen N.F."/>
            <person name="Hayashizaki Y."/>
            <person name="Johnson-Hopson C."/>
            <person name="Hsuan V.W."/>
            <person name="Iida K."/>
            <person name="Karnes M."/>
            <person name="Khan S."/>
            <person name="Koesema E."/>
            <person name="Ishida J."/>
            <person name="Jiang P.X."/>
            <person name="Jones T."/>
            <person name="Kawai J."/>
            <person name="Kamiya A."/>
            <person name="Meyers C."/>
            <person name="Nakajima M."/>
            <person name="Narusaka M."/>
            <person name="Seki M."/>
            <person name="Sakurai T."/>
            <person name="Satou M."/>
            <person name="Tamse R."/>
            <person name="Vaysberg M."/>
            <person name="Wallender E.K."/>
            <person name="Wong C."/>
            <person name="Yamamura Y."/>
            <person name="Yuan S."/>
            <person name="Shinozaki K."/>
            <person name="Davis R.W."/>
            <person name="Theologis A."/>
            <person name="Ecker J.R."/>
        </authorList>
    </citation>
    <scope>NUCLEOTIDE SEQUENCE [LARGE SCALE MRNA]</scope>
    <source>
        <strain>cv. Columbia</strain>
    </source>
</reference>
<reference key="5">
    <citation type="journal article" date="2000" name="J. Biol. Chem.">
        <title>Microbial elicitors induce activation and dual phosphorylation of the Arabidopsis thaliana MAPK 6.</title>
        <authorList>
            <person name="Nuehse T.S."/>
            <person name="Peck S.C."/>
            <person name="Hirt H."/>
            <person name="Boller T."/>
        </authorList>
    </citation>
    <scope>ACTIVITY REGULATION</scope>
    <scope>PHOSPHORYLATION AT THR-221 AND TYR-223</scope>
    <scope>CATALYTIC ACTIVITY</scope>
</reference>
<reference key="6">
    <citation type="journal article" date="2000" name="Plant J.">
        <title>Various abiotic stresses rapidly activate Arabidopsis MAP kinases ATMPK4 and ATMPK6.</title>
        <authorList>
            <person name="Ichimura K."/>
            <person name="Mizoguchi T."/>
            <person name="Yoshida R."/>
            <person name="Yuasa T."/>
            <person name="Shinozaki K."/>
        </authorList>
    </citation>
    <scope>ACTIVITY REGULATION</scope>
    <scope>PHOSPHORYLATION</scope>
    <scope>CATALYTIC ACTIVITY</scope>
</reference>
<reference key="7">
    <citation type="journal article" date="2000" name="Proc. Natl. Acad. Sci. U.S.A.">
        <title>Functional analysis of oxidative stress-activated mitogen-activated protein kinase cascade in plants.</title>
        <authorList>
            <person name="Kovtun Y."/>
            <person name="Chiu W.-L."/>
            <person name="Tena G."/>
            <person name="Sheen J."/>
        </authorList>
    </citation>
    <scope>ACTIVITY REGULATION</scope>
    <scope>CATALYTIC ACTIVITY</scope>
</reference>
<reference key="8">
    <citation type="journal article" date="2001" name="Plant Cell Physiol.">
        <title>Oxidative stress activates ATMPK6, an Arabidopsis homologue of MAP kinase.</title>
        <authorList>
            <person name="Yuasa T."/>
            <person name="Ichimura K."/>
            <person name="Mizoguchi T."/>
            <person name="Shinozaki K."/>
        </authorList>
    </citation>
    <scope>ACTIVITY REGULATION</scope>
    <scope>CATALYTIC ACTIVITY</scope>
</reference>
<reference key="9">
    <citation type="journal article" date="2001" name="Plant Physiol.">
        <title>Harpin induces activation of the Arabidopsis mitogen-activated protein kinases AtMPK4 and AtMPK6.</title>
        <authorList>
            <person name="Desikan R."/>
            <person name="Hancock J.T."/>
            <person name="Ichimura K."/>
            <person name="Shinozaki K."/>
            <person name="Neill S.J."/>
        </authorList>
    </citation>
    <scope>ACTIVITY REGULATION</scope>
    <scope>CATALYTIC ACTIVITY</scope>
</reference>
<reference key="10">
    <citation type="journal article" date="2002" name="FEBS Lett.">
        <title>Different protein kinase families are activated by osmotic stresses in Arabidopsis thaliana cell suspensions. Involvement of the MAP kinases AtMPK3 and AtMPK6.</title>
        <authorList>
            <person name="Droillard M.-J."/>
            <person name="Boudsocq M."/>
            <person name="Barbier-Brygoo H."/>
            <person name="Lauriere C."/>
        </authorList>
    </citation>
    <scope>ACTIVITY REGULATION</scope>
    <scope>CATALYTIC ACTIVITY</scope>
</reference>
<reference key="11">
    <citation type="journal article" date="2002" name="Nature">
        <title>MAP kinase signalling cascade in Arabidopsis innate immunity.</title>
        <authorList>
            <person name="Asai T."/>
            <person name="Tena G."/>
            <person name="Plotnikova J."/>
            <person name="Willmann M.R."/>
            <person name="Chiu W.-L."/>
            <person name="Gomez-Gomez L."/>
            <person name="Boller T."/>
            <person name="Ausubel F.M."/>
            <person name="Sheen J."/>
        </authorList>
    </citation>
    <scope>FUNCTION</scope>
    <scope>MUTAGENESIS OF LYS-92 AND LYS-93</scope>
</reference>
<reference key="12">
    <citation type="journal article" date="2002" name="Trends Plant Sci.">
        <title>Mitogen-activated protein kinase cascades in plants: a new nomenclature.</title>
        <authorList>
            <consortium name="MAPK group"/>
        </authorList>
    </citation>
    <scope>GENE FAMILY</scope>
    <scope>NOMENCLATURE</scope>
</reference>
<reference key="13">
    <citation type="journal article" date="2003" name="EMBO J.">
        <title>A MAPK pathway mediates ethylene signaling in plants.</title>
        <authorList>
            <person name="Ouaked F."/>
            <person name="Rozhon W."/>
            <person name="Lecourieux D."/>
            <person name="Hirt H."/>
        </authorList>
    </citation>
    <scope>ACTIVITY REGULATION</scope>
    <scope>CATALYTIC ACTIVITY</scope>
</reference>
<reference key="14">
    <citation type="journal article" date="2003" name="Proc. Natl. Acad. Sci. U.S.A.">
        <title>NDP kinase 2 interacts with two oxidative stress-activated MAPKs to regulate cellular redox state and enhances multiple stress tolerance in transgenic plants.</title>
        <authorList>
            <person name="Moon H."/>
            <person name="Lee B."/>
            <person name="Choi G."/>
            <person name="Shin D."/>
            <person name="Prasad D.T."/>
            <person name="Lee O."/>
            <person name="Kwak S.-S."/>
            <person name="Kim D.H."/>
            <person name="Nam J."/>
            <person name="Bahk J."/>
            <person name="Hong J.C."/>
            <person name="Lee S.Y."/>
            <person name="Cho M.J."/>
            <person name="Lim C.O."/>
            <person name="Yun D.-J."/>
        </authorList>
    </citation>
    <scope>INTERACTION WITH NDPK2</scope>
</reference>
<reference key="15">
    <citation type="journal article" date="2004" name="Mol. Cell">
        <title>The MKK2 pathway mediates cold and salt stress signaling in Arabidopsis.</title>
        <authorList>
            <person name="Teige M."/>
            <person name="Scheikl E."/>
            <person name="Eulgem T."/>
            <person name="Doczi R."/>
            <person name="Ichimura K."/>
            <person name="Shinozaki K."/>
            <person name="Dangl J.L."/>
            <person name="Hirt H."/>
        </authorList>
    </citation>
    <scope>FUNCTION</scope>
    <scope>ACTIVITY REGULATION</scope>
    <scope>INTERACTION WITH MKK2</scope>
    <scope>CATALYTIC ACTIVITY</scope>
</reference>
<reference key="16">
    <citation type="journal article" date="2004" name="Plant Cell">
        <title>Silencing of the mitogen-activated protein kinase MPK6 compromises disease resistance in Arabidopsis.</title>
        <authorList>
            <person name="Menke F.L.H."/>
            <person name="van Pelt J.A."/>
            <person name="Pieterse C.M.J."/>
            <person name="Klessig D.F."/>
        </authorList>
    </citation>
    <scope>FUNCTION</scope>
</reference>
<reference key="17">
    <citation type="journal article" date="2004" name="Plant Cell">
        <title>Phosphorylation of 1-aminocyclopropane-1-carboxylic acid synthase by MPK6, a stress-responsive mitogen-activated protein kinase, induces ethylene biosynthesis in Arabidopsis.</title>
        <authorList>
            <person name="Liu Y."/>
            <person name="Zhang S."/>
        </authorList>
    </citation>
    <scope>FUNCTION</scope>
</reference>
<reference key="18">
    <citation type="journal article" date="2004" name="Plant J.">
        <title>Stress hormone-independent activation and nuclear translocation of mitogen-activated protein kinases in Arabidopsis thaliana during ozone exposure.</title>
        <authorList>
            <person name="Ahlfors R."/>
            <person name="Macioszek V."/>
            <person name="Rudd J."/>
            <person name="Brosche M."/>
            <person name="Schlichting R."/>
            <person name="Scheel D."/>
            <person name="Kangasjarvi J."/>
        </authorList>
    </citation>
    <scope>ACTIVITY REGULATION</scope>
    <scope>SUBCELLULAR LOCATION</scope>
    <scope>CATALYTIC ACTIVITY</scope>
</reference>
<reference key="19">
    <citation type="journal article" date="2004" name="Plant Physiol.">
        <title>Mastoparan rapidly activates plant MAP kinase signaling independent of heterotrimeric G proteins.</title>
        <authorList>
            <person name="Miles G.P."/>
            <person name="Samuel M.A."/>
            <person name="Jones A.M."/>
            <person name="Ellis B.E."/>
        </authorList>
    </citation>
    <scope>ACTIVITY REGULATION</scope>
</reference>
<reference key="20">
    <citation type="journal article" date="2005" name="Environ. Pollut.">
        <title>RNA interference-based (RNAi) suppression of AtMPK6, an Arabidopsis mitogen-activated protein kinase, results in hypersensitivity to ozone and misregulation of AtMPK3.</title>
        <authorList>
            <person name="Miles G.P."/>
            <person name="Samuel M.A."/>
            <person name="Zhang Y."/>
            <person name="Ellis B.E."/>
        </authorList>
    </citation>
    <scope>FUNCTION</scope>
</reference>
<reference key="21">
    <citation type="journal article" date="2006" name="Trends Plant Sci.">
        <title>Ancient signals: comparative genomics of plant MAPK and MAPKK gene families.</title>
        <authorList>
            <person name="Hamel L.P."/>
            <person name="Nicole M.C."/>
            <person name="Sritubtim S."/>
            <person name="Morency M.J."/>
            <person name="Ellis M."/>
            <person name="Ehlting J."/>
            <person name="Beaudoin N."/>
            <person name="Barbazuk B."/>
            <person name="Klessig D."/>
            <person name="Lee J."/>
            <person name="Martin G."/>
            <person name="Mundy J."/>
            <person name="Ohashi Y."/>
            <person name="Scheel D."/>
            <person name="Sheen J."/>
            <person name="Xing T."/>
            <person name="Zhang S."/>
            <person name="Seguin A."/>
            <person name="Ellis B.E."/>
        </authorList>
    </citation>
    <scope>GENE FAMILY</scope>
</reference>
<reference key="22">
    <citation type="journal article" date="2007" name="J. Biol. Chem.">
        <title>Arabidopsis MAPK phosphatase 2 (MKP2) positively regulates oxidative stress tolerance and inactivates the MPK3 and MPK6 MAPKs.</title>
        <authorList>
            <person name="Lee J.S."/>
            <person name="Ellis B.E."/>
        </authorList>
    </citation>
    <scope>ACTIVITY REGULATION</scope>
    <scope>DEPHOSPHORYLATION</scope>
</reference>
<reference key="23">
    <citation type="journal article" date="2007" name="Mol. Plant Microbe Interact.">
        <title>The MAP kinase kinase MKK2 affects disease resistance in Arabidopsis.</title>
        <authorList>
            <person name="Brader G."/>
            <person name="Djamei A."/>
            <person name="Teige M."/>
            <person name="Palva E.T."/>
            <person name="Hirt H."/>
        </authorList>
    </citation>
    <scope>ACTIVITY REGULATION</scope>
</reference>
<reference key="24">
    <citation type="journal article" date="2007" name="Plant Cell">
        <title>Stomatal development and patterning are regulated by environmentally responsive mitogen-activated protein kinases in Arabidopsis.</title>
        <authorList>
            <person name="Wang H."/>
            <person name="Ngwenyama N."/>
            <person name="Liu Y."/>
            <person name="Walker J.C."/>
            <person name="Zhang S."/>
        </authorList>
    </citation>
    <scope>FUNCTION</scope>
</reference>
<reference key="25">
    <citation type="journal article" date="2007" name="Plant Cell">
        <title>The mitogen-activated protein kinase cascade MKK3-MPK6 is an important part of the jasmonate signal transduction pathway in Arabidopsis.</title>
        <authorList>
            <person name="Takahashi F."/>
            <person name="Yoshida R."/>
            <person name="Ichimura K."/>
            <person name="Mizoguchi T."/>
            <person name="Seo S."/>
            <person name="Yonezawa M."/>
            <person name="Maruyama K."/>
            <person name="Yamaguchi-Shinozaki K."/>
            <person name="Shinozaki K."/>
        </authorList>
    </citation>
    <scope>ACTIVITY REGULATION</scope>
    <scope>FUNCTION</scope>
</reference>
<reference key="26">
    <citation type="journal article" date="2007" name="Plant Cell">
        <title>The PP2C-type phosphatase AP2C1, which negatively regulates MPK4 and MPK6, modulates innate immunity, jasmonic acid, and ethylene levels in Arabidopsis.</title>
        <authorList>
            <person name="Schweighofer A."/>
            <person name="Kazanaviciute V."/>
            <person name="Scheikl E."/>
            <person name="Teige M."/>
            <person name="Doczi R."/>
            <person name="Hirt H."/>
            <person name="Schwanninger M."/>
            <person name="Kant M."/>
            <person name="Schuurink R."/>
            <person name="Mauch F."/>
            <person name="Buchala A."/>
            <person name="Cardinale F."/>
            <person name="Meskiene I."/>
        </authorList>
    </citation>
    <scope>ACTIVITY REGULATION</scope>
    <scope>INTERACTION WITH AP2C1</scope>
</reference>
<reference key="27">
    <citation type="journal article" date="2007" name="Plant Cell">
        <title>The Arabidopsis mitogen-activated protein kinase kinase MKK3 is upstream of group C mitogen-activated protein kinases and participates in pathogen signaling.</title>
        <authorList>
            <person name="Doczi R."/>
            <person name="Brader G."/>
            <person name="Pettko-Szandtner A."/>
            <person name="Rajh I."/>
            <person name="Djamei A."/>
            <person name="Pitzschke A."/>
            <person name="Teige M."/>
            <person name="Hirt H."/>
        </authorList>
    </citation>
    <scope>ACTIVITY REGULATION</scope>
</reference>
<reference key="28">
    <citation type="journal article" date="2008" name="Nature">
        <title>Dual control of nuclear EIN3 by bifurcate MAPK cascades in C2H4 signalling.</title>
        <authorList>
            <person name="Yoo S.D."/>
            <person name="Cho Y.H."/>
            <person name="Tena G."/>
            <person name="Xiong Y."/>
            <person name="Sheen J."/>
        </authorList>
    </citation>
    <scope>FUNCTION</scope>
    <scope>ACTIVITY REGULATION</scope>
    <scope>SUBCELLULAR LOCATION</scope>
</reference>
<reference key="29">
    <citation type="journal article" date="2008" name="Plant J.">
        <title>AtMKK1 mediates ABA-induced CAT1 expression and H2O2 production via AtMPK6-coupled signaling in Arabidopsis.</title>
        <authorList>
            <person name="Xing Y."/>
            <person name="Jia W."/>
            <person name="Zhang J."/>
        </authorList>
    </citation>
    <scope>FUNCTION</scope>
</reference>
<reference key="30">
    <citation type="journal article" date="2008" name="Plant Signal. Behav.">
        <title>Comprehensive analysis of protein-protein interactions between Arabidopsis MAPKs and MAPK kinases helps define potential MAPK signalling modules.</title>
        <authorList>
            <person name="Lee J.S."/>
            <person name="Huh K.W."/>
            <person name="Bhargava A."/>
            <person name="Ellis B.E."/>
        </authorList>
    </citation>
    <scope>INTERACTION WITH MKK2; MKK4; MKK5 AND MKK6</scope>
</reference>
<reference key="31">
    <citation type="journal article" date="2008" name="Proc. Natl. Acad. Sci. U.S.A.">
        <title>A fungal-responsive MAPK cascade regulates phytoalexin biosynthesis in Arabidopsis.</title>
        <authorList>
            <person name="Ren D."/>
            <person name="Liu Y."/>
            <person name="Yang K.Y."/>
            <person name="Han L."/>
            <person name="Mao G."/>
            <person name="Glazebrook J."/>
            <person name="Zhang S."/>
        </authorList>
    </citation>
    <scope>FUNCTION</scope>
</reference>
<reference key="32">
    <citation type="journal article" date="2009" name="J. Proteomics">
        <title>Phosphoproteomic analysis of nuclei-enriched fractions from Arabidopsis thaliana.</title>
        <authorList>
            <person name="Jones A.M.E."/>
            <person name="MacLean D."/>
            <person name="Studholme D.J."/>
            <person name="Serna-Sanz A."/>
            <person name="Andreasson E."/>
            <person name="Rathjen J.P."/>
            <person name="Peck S.C."/>
        </authorList>
    </citation>
    <scope>SUBCELLULAR LOCATION</scope>
    <scope>PHOSPHORYLATION [LARGE SCALE ANALYSIS] AT THR-226</scope>
    <scope>IDENTIFICATION BY MASS SPECTROMETRY [LARGE SCALE ANALYSIS]</scope>
    <source>
        <strain>cv. Columbia</strain>
    </source>
</reference>
<reference key="33">
    <citation type="journal article" date="2009" name="Plant Cell">
        <title>MAP kinase phosphatase1 and protein tyrosine phosphatase1 are repressors of salicylic acid synthesis and SNC1-mediated responses in Arabidopsis.</title>
        <authorList>
            <person name="Bartels S."/>
            <person name="Anderson J.C."/>
            <person name="Gonzalez Besteiro M.A."/>
            <person name="Carreri A."/>
            <person name="Hirt H."/>
            <person name="Buchala A."/>
            <person name="Metraux J.P."/>
            <person name="Peck S.C."/>
            <person name="Ulm R."/>
        </authorList>
    </citation>
    <scope>ACTIVITY REGULATION</scope>
    <scope>DEPHOSPHORYLATION</scope>
    <scope>INTERACTION WITH MKP1 AND PTP1</scope>
</reference>
<reference key="34">
    <citation type="journal article" date="2009" name="Plant Mol. Biol.">
        <title>AtMKK1 and AtMPK6 are involved in abscisic acid and sugar signaling in Arabidopsis seed germination.</title>
        <authorList>
            <person name="Xing Y."/>
            <person name="Jia W."/>
            <person name="Zhang J."/>
        </authorList>
    </citation>
    <scope>FUNCTION</scope>
    <scope>DISRUPTION PHENOTYPE</scope>
</reference>
<reference key="35">
    <citation type="journal article" date="2009" name="Plant Physiol.">
        <title>An arabidopsis mitogen-activated protein kinase cascade, MKK9-MPK6, plays a role in leaf senescence.</title>
        <authorList>
            <person name="Zhou C."/>
            <person name="Cai Z."/>
            <person name="Guo Y."/>
            <person name="Gan S."/>
        </authorList>
    </citation>
    <scope>FUNCTION</scope>
    <scope>ACTIVITY REGULATION</scope>
    <scope>DISRUPTION PHENOTYPE</scope>
</reference>
<reference key="36">
    <citation type="journal article" date="2010" name="Plant J.">
        <title>MAPK phosphatase MKP2 mediates disease responses in Arabidopsis and functionally interacts with MPK3 and MPK6.</title>
        <authorList>
            <person name="Lumbreras V."/>
            <person name="Vilela B."/>
            <person name="Irar S."/>
            <person name="Sole M."/>
            <person name="Capellades M."/>
            <person name="Valls M."/>
            <person name="Coca M."/>
            <person name="Pages M."/>
        </authorList>
    </citation>
    <scope>INTERACTION WITH DSPTP1B/MKP2</scope>
</reference>
<reference key="37">
    <citation type="journal article" date="2010" name="Plant Signal. Behav.">
        <title>Regulation of MAPK signaling and cell death by MAPK phosphatase MKP2.</title>
        <authorList>
            <person name="Vilela B."/>
            <person name="Pages M."/>
            <person name="Lumbreras V."/>
        </authorList>
    </citation>
    <scope>INTERACTION WITH DSPTP1B/MKP2</scope>
</reference>
<reference key="38">
    <citation type="journal article" date="2011" name="Plant J.">
        <title>AtMPK4 is required for male-specific meiotic cytokinesis in Arabidopsis.</title>
        <authorList>
            <person name="Zeng Q."/>
            <person name="Chen J.G."/>
            <person name="Ellis B.E."/>
        </authorList>
    </citation>
    <scope>INTERACTION WITH MKK6</scope>
</reference>
<reference key="39">
    <citation type="journal article" date="2012" name="Mol. Biol. Rep.">
        <title>Expression analysis of MAP2K9 and MAPK6 during pathogenesis of Alternaria blight in Arabidopsis thaliana ecotype Columbia.</title>
        <authorList>
            <person name="Kannan P."/>
            <person name="Pandey D."/>
            <person name="Gupta A.K."/>
            <person name="Punetha H."/>
            <person name="Taj G."/>
            <person name="Kumar A."/>
        </authorList>
    </citation>
    <scope>INDUCTION BY PATHOGEN</scope>
</reference>
<reference key="40">
    <citation type="journal article" date="2012" name="Plant Cell">
        <title>A MAPK cascade downstream of ERECTA receptor-like protein kinase regulates Arabidopsis inflorescence architecture by promoting localized cell proliferation.</title>
        <authorList>
            <person name="Meng X."/>
            <person name="Wang H."/>
            <person name="He Y."/>
            <person name="Liu Y."/>
            <person name="Walker J.C."/>
            <person name="Torii K.U."/>
            <person name="Zhang S."/>
        </authorList>
    </citation>
    <scope>FUNCTION</scope>
</reference>
<reference key="41">
    <citation type="journal article" date="2012" name="Plant Cell Rep.">
        <title>Arabidopsis MKKK20 is involved in osmotic stress response via regulation of MPK6 activity.</title>
        <authorList>
            <person name="Kim J.-M."/>
            <person name="Woo D.-H."/>
            <person name="Kim S.-H."/>
            <person name="Lee S.-Y."/>
            <person name="Park H.-Y."/>
            <person name="Seok H.-Y."/>
            <person name="Chung W.S."/>
            <person name="Moon Y.-H."/>
        </authorList>
    </citation>
    <scope>ACTIVITY REGULATION</scope>
    <source>
        <strain>cv. Columbia</strain>
    </source>
</reference>
<reference key="42">
    <citation type="journal article" date="2014" name="New Phytol.">
        <title>The Arabidopsis thaliana mitogen-activated protein kinases MPK3 and MPK6 target a subclass of 'VQ-motif'-containing proteins to regulate immune responses.</title>
        <authorList>
            <person name="Pecher P."/>
            <person name="Eschen-Lippold L."/>
            <person name="Herklotz S."/>
            <person name="Kuhle K."/>
            <person name="Naumann K."/>
            <person name="Bethke G."/>
            <person name="Uhrig J."/>
            <person name="Weyhe M."/>
            <person name="Scheel D."/>
            <person name="Lee J."/>
        </authorList>
    </citation>
    <scope>INTERACTION WITH VQ4 AND IKU1/VQ14</scope>
</reference>
<reference key="43">
    <citation type="journal article" date="2014" name="PLoS Pathog.">
        <title>Arabidopsis LIP5, a positive regulator of multivesicular body biogenesis, is a critical target of pathogen-responsive MAPK cascade in plant basal defense.</title>
        <authorList>
            <person name="Wang F."/>
            <person name="Shang Y."/>
            <person name="Fan B."/>
            <person name="Yu J.-Q."/>
            <person name="Chen Z."/>
        </authorList>
    </citation>
    <scope>FUNCTION</scope>
    <scope>INTERACTION WITH LIP5</scope>
    <source>
        <strain>cv. Columbia</strain>
    </source>
</reference>
<reference key="44">
    <citation type="journal article" date="2015" name="Dev. Cell">
        <title>The BASL polarity protein controls a MAPK signaling feedback loop in asymmetric cell division.</title>
        <authorList>
            <person name="Zhang Y."/>
            <person name="Wang P."/>
            <person name="Shao W."/>
            <person name="Zhu J.-K."/>
            <person name="Dong J."/>
        </authorList>
    </citation>
    <scope>FUNCTION</scope>
    <scope>INTERACTION WITH BASL AND YDA</scope>
    <scope>SUBCELLULAR LOCATION</scope>
    <source>
        <strain>cv. Columbia</strain>
    </source>
</reference>
<reference key="45">
    <citation type="journal article" date="2015" name="Nature">
        <title>Pathogen-secreted proteases activate a novel plant immune pathway.</title>
        <authorList>
            <person name="Cheng Z."/>
            <person name="Li J.F."/>
            <person name="Niu Y."/>
            <person name="Zhang X.C."/>
            <person name="Woody O.Z."/>
            <person name="Xiong Y."/>
            <person name="Djonovic S."/>
            <person name="Millet Y."/>
            <person name="Bush J."/>
            <person name="McConkey B.J."/>
            <person name="Sheen J."/>
            <person name="Ausubel F.M."/>
        </authorList>
    </citation>
    <scope>INTERACTION WITH RACK1A; RACK1B AND RACK1C</scope>
</reference>
<reference key="46">
    <citation type="journal article" date="2016" name="Curr. Biol.">
        <title>Phosphorylation of the polarity protein BASL differentiates asymmetric cell fate through MAPKs and SPCH.</title>
        <authorList>
            <person name="Zhang Y."/>
            <person name="Guo X."/>
            <person name="Dong J."/>
        </authorList>
    </citation>
    <scope>DEVELOPMENTAL STAGE</scope>
    <scope>MUTAGENESIS OF 221-THR--TYR-223</scope>
    <scope>SUBCELLULAR LOCATION</scope>
    <scope>ACTIVITY REGULATION</scope>
    <source>
        <strain>cv. Columbia</strain>
    </source>
</reference>
<reference key="47">
    <citation type="journal article" date="2016" name="J. Exp. Bot.">
        <title>Quantitative phosphoproteomics of protein kinase SnRK1 regulated protein phosphorylation in Arabidopsis under submergence.</title>
        <authorList>
            <person name="Cho H.Y."/>
            <person name="Wen T.N."/>
            <person name="Wang Y.T."/>
            <person name="Shih M.C."/>
        </authorList>
    </citation>
    <scope>INTERACTION WITH PTP1</scope>
</reference>
<reference key="48">
    <citation type="journal article" date="2016" name="Curr. Plant Biol.">
        <title>A protein-protein interaction network linking the energy-sensor kinase SnRK1 to multiple signaling pathways in Arabidopsis thaliana.</title>
        <authorList>
            <person name="Nietzsche M."/>
            <person name="Landgraf R."/>
            <person name="Tohge T."/>
            <person name="Boernke F."/>
        </authorList>
    </citation>
    <scope>INTERACTION WITH FLZ9</scope>
</reference>
<reference key="49">
    <citation type="journal article" date="2017" name="Plant Physiol.">
        <title>AIK1, a mitogen-activated protein kinase, modulates abscisic acid responses through the MKK5-MPK6 kinase cascade.</title>
        <authorList>
            <person name="Li K."/>
            <person name="Yang F."/>
            <person name="Zhang G."/>
            <person name="Song S."/>
            <person name="Li Y."/>
            <person name="Ren D."/>
            <person name="Miao Y."/>
            <person name="Song C.-P."/>
        </authorList>
    </citation>
    <scope>FUNCTION</scope>
    <scope>DISRUPTION PHENOTYPE</scope>
    <scope>INTERACTION WITH MKK5</scope>
    <scope>ACTIVITY REGULATION</scope>
    <source>
        <strain>cv. Columbia</strain>
    </source>
</reference>
<reference key="50">
    <citation type="journal article" date="2018" name="Front. Plant Sci.">
        <title>Mitogen-activated protein kinase cascades in plant hormone signaling.</title>
        <authorList>
            <person name="Jagodzik P."/>
            <person name="Tajdel-Zielinska M."/>
            <person name="Ciesla A."/>
            <person name="Marczak M."/>
            <person name="Ludwikow A."/>
        </authorList>
    </citation>
    <scope>REVIEW ON MITOGEN-ACTIVATED PROTEIN KINASE CASCADES</scope>
</reference>
<reference key="51">
    <citation type="journal article" date="2016" name="Sci. Rep.">
        <title>Analysis of crystal structure of Arabidopsis MPK6 and generation of its mutants with higher activity.</title>
        <authorList>
            <person name="Wang B."/>
            <person name="Qin X."/>
            <person name="Wu J."/>
            <person name="Deng H."/>
            <person name="Li Y."/>
            <person name="Yang H."/>
            <person name="Chen Z."/>
            <person name="Liu G."/>
            <person name="Ren D."/>
        </authorList>
    </citation>
    <scope>X-RAY CRYSTALLOGRAPHY (3.00 ANGSTROMS) OF 29-395</scope>
    <scope>MUTAGENESIS OF GLU-289; PHE-364; PHE-366 AND PHE-368</scope>
</reference>
<reference key="52">
    <citation type="journal article" date="2019" name="Nat. Plants">
        <title>Bipartite anchoring of SCREAM enforces stomatal initiation by coupling MAP kinases to SPEECHLESS.</title>
        <authorList>
            <person name="Putarjunan A."/>
            <person name="Ruble J."/>
            <person name="Srivastava A."/>
            <person name="Zhao C."/>
            <person name="Rychel A.L."/>
            <person name="Hofstetter A.K."/>
            <person name="Tang X."/>
            <person name="Zhu J.K."/>
            <person name="Tama F."/>
            <person name="Zheng N."/>
            <person name="Torii K.U."/>
        </authorList>
    </citation>
    <scope>X-RAY CRYSTALLOGRAPHY (2.75 ANGSTROMS) OF 32-395</scope>
    <scope>SUBCELLULAR LOCATION</scope>
</reference>
<proteinExistence type="evidence at protein level"/>
<organism>
    <name type="scientific">Arabidopsis thaliana</name>
    <name type="common">Mouse-ear cress</name>
    <dbReference type="NCBI Taxonomy" id="3702"/>
    <lineage>
        <taxon>Eukaryota</taxon>
        <taxon>Viridiplantae</taxon>
        <taxon>Streptophyta</taxon>
        <taxon>Embryophyta</taxon>
        <taxon>Tracheophyta</taxon>
        <taxon>Spermatophyta</taxon>
        <taxon>Magnoliopsida</taxon>
        <taxon>eudicotyledons</taxon>
        <taxon>Gunneridae</taxon>
        <taxon>Pentapetalae</taxon>
        <taxon>rosids</taxon>
        <taxon>malvids</taxon>
        <taxon>Brassicales</taxon>
        <taxon>Brassicaceae</taxon>
        <taxon>Camelineae</taxon>
        <taxon>Arabidopsis</taxon>
    </lineage>
</organism>
<protein>
    <recommendedName>
        <fullName evidence="48">Mitogen-activated protein kinase 6</fullName>
        <shortName evidence="48">AtMPK6</shortName>
        <shortName evidence="48">MAP kinase 6</shortName>
        <ecNumber evidence="1 4 5 6">2.7.11.24</ecNumber>
    </recommendedName>
</protein>
<keyword id="KW-0002">3D-structure</keyword>
<keyword id="KW-0938">Abscisic acid signaling pathway</keyword>
<keyword id="KW-0067">ATP-binding</keyword>
<keyword id="KW-0963">Cytoplasm</keyword>
<keyword id="KW-0381">Hypersensitive response</keyword>
<keyword id="KW-0418">Kinase</keyword>
<keyword id="KW-0547">Nucleotide-binding</keyword>
<keyword id="KW-0539">Nucleus</keyword>
<keyword id="KW-0597">Phosphoprotein</keyword>
<keyword id="KW-0611">Plant defense</keyword>
<keyword id="KW-1185">Reference proteome</keyword>
<keyword id="KW-0723">Serine/threonine-protein kinase</keyword>
<keyword id="KW-0346">Stress response</keyword>
<keyword id="KW-0808">Transferase</keyword>
<evidence type="ECO:0000255" key="1">
    <source>
        <dbReference type="PROSITE-ProRule" id="PRU00159"/>
    </source>
</evidence>
<evidence type="ECO:0000255" key="2">
    <source>
        <dbReference type="PROSITE-ProRule" id="PRU10027"/>
    </source>
</evidence>
<evidence type="ECO:0000256" key="3">
    <source>
        <dbReference type="SAM" id="MobiDB-lite"/>
    </source>
</evidence>
<evidence type="ECO:0000269" key="4">
    <source>
    </source>
</evidence>
<evidence type="ECO:0000269" key="5">
    <source>
    </source>
</evidence>
<evidence type="ECO:0000269" key="6">
    <source>
    </source>
</evidence>
<evidence type="ECO:0000269" key="7">
    <source>
    </source>
</evidence>
<evidence type="ECO:0000269" key="8">
    <source>
    </source>
</evidence>
<evidence type="ECO:0000269" key="9">
    <source>
    </source>
</evidence>
<evidence type="ECO:0000269" key="10">
    <source>
    </source>
</evidence>
<evidence type="ECO:0000269" key="11">
    <source>
    </source>
</evidence>
<evidence type="ECO:0000269" key="12">
    <source>
    </source>
</evidence>
<evidence type="ECO:0000269" key="13">
    <source>
    </source>
</evidence>
<evidence type="ECO:0000269" key="14">
    <source>
    </source>
</evidence>
<evidence type="ECO:0000269" key="15">
    <source>
    </source>
</evidence>
<evidence type="ECO:0000269" key="16">
    <source>
    </source>
</evidence>
<evidence type="ECO:0000269" key="17">
    <source>
    </source>
</evidence>
<evidence type="ECO:0000269" key="18">
    <source>
    </source>
</evidence>
<evidence type="ECO:0000269" key="19">
    <source>
    </source>
</evidence>
<evidence type="ECO:0000269" key="20">
    <source>
    </source>
</evidence>
<evidence type="ECO:0000269" key="21">
    <source>
    </source>
</evidence>
<evidence type="ECO:0000269" key="22">
    <source>
    </source>
</evidence>
<evidence type="ECO:0000269" key="23">
    <source>
    </source>
</evidence>
<evidence type="ECO:0000269" key="24">
    <source>
    </source>
</evidence>
<evidence type="ECO:0000269" key="25">
    <source>
    </source>
</evidence>
<evidence type="ECO:0000269" key="26">
    <source>
    </source>
</evidence>
<evidence type="ECO:0000269" key="27">
    <source>
    </source>
</evidence>
<evidence type="ECO:0000269" key="28">
    <source>
    </source>
</evidence>
<evidence type="ECO:0000269" key="29">
    <source>
    </source>
</evidence>
<evidence type="ECO:0000269" key="30">
    <source>
    </source>
</evidence>
<evidence type="ECO:0000269" key="31">
    <source>
    </source>
</evidence>
<evidence type="ECO:0000269" key="32">
    <source>
    </source>
</evidence>
<evidence type="ECO:0000269" key="33">
    <source>
    </source>
</evidence>
<evidence type="ECO:0000269" key="34">
    <source>
    </source>
</evidence>
<evidence type="ECO:0000269" key="35">
    <source>
    </source>
</evidence>
<evidence type="ECO:0000269" key="36">
    <source>
    </source>
</evidence>
<evidence type="ECO:0000269" key="37">
    <source>
    </source>
</evidence>
<evidence type="ECO:0000269" key="38">
    <source>
    </source>
</evidence>
<evidence type="ECO:0000269" key="39">
    <source>
    </source>
</evidence>
<evidence type="ECO:0000269" key="40">
    <source>
    </source>
</evidence>
<evidence type="ECO:0000269" key="41">
    <source>
    </source>
</evidence>
<evidence type="ECO:0000269" key="42">
    <source>
    </source>
</evidence>
<evidence type="ECO:0000269" key="43">
    <source>
    </source>
</evidence>
<evidence type="ECO:0000269" key="44">
    <source>
    </source>
</evidence>
<evidence type="ECO:0000269" key="45">
    <source>
    </source>
</evidence>
<evidence type="ECO:0000269" key="46">
    <source>
    </source>
</evidence>
<evidence type="ECO:0000269" key="47">
    <source ref="48"/>
</evidence>
<evidence type="ECO:0000303" key="48">
    <source>
    </source>
</evidence>
<evidence type="ECO:0000305" key="49"/>
<evidence type="ECO:0000312" key="50">
    <source>
        <dbReference type="Araport" id="AT2G43790"/>
    </source>
</evidence>
<evidence type="ECO:0000312" key="51">
    <source>
        <dbReference type="EMBL" id="AAB64027.1"/>
    </source>
</evidence>
<evidence type="ECO:0007744" key="52">
    <source>
    </source>
</evidence>
<evidence type="ECO:0007829" key="53">
    <source>
        <dbReference type="PDB" id="5CI6"/>
    </source>
</evidence>
<evidence type="ECO:0007829" key="54">
    <source>
        <dbReference type="PDB" id="6DTL"/>
    </source>
</evidence>
<comment type="function">
    <text evidence="9 13 15 17 18 19 20 25 26 27 28 29 37 39 41 45">Mitogen-activated protein kinase (MAPK) which regulates abscisic acid (ABA) responses in a MAPKKK20-MKK5-MPK6 cascade involved in root growth (e.g. root cell division and elongation) and stomatal response (PubMed:27913741). Involved in oxidative stress-mediated signaling cascade (such as ozone). Involved in the innate immune MAP kinase signaling cascade (MEKK1, MKK4/MKK5 and MPK3/MPK6) downstream of bacterial flagellin receptor FLS2. May be involved in hypersensitive response (HR)-mediated signaling cascade by modulating LIP5 phosphorylation and subsequent multivesicular bodies (MVBs) trafficking. May phosphorylate regulators of WRKY transcription factors. Phosphorylates 1-aminocyclopropane-1-carboxylic acid synthases (ACS2 and ACS6) and may be involved in the regulation of bacterial elicitor flagellin-induced ethylene production. Regulates locally gene-mediated and basal resistance response to certain pathogens. May be involved in the cold and salinity stress-mediated MAP kinase signaling cascade (MEKK1, MKK1/MKK2 and MPK4/MPK6). MKK1-MPK6 module mediates abscisic acid (ABA)-dependent CAT1 expression with H(2)O(2) production and response to drought and salt stress. MKK1-MPK6 module is also involved in sugar signaling during the process of seed germination. MKK3-MPK6 module plays an important role in the jasmonate signal transduction pathway through the negative regulation of MYC2/JIN1 expression. MKK9-MPK3/MPK6 module phosphorylates and activates EIN3, leading to the promotion of EIN3-mediated transcription in ethylene signaling. MPK3/MPK6 cascade regulates camalexin synthesis through transcriptional regulation of the biosynthetic genes after pathogen infection. MKK9-MPK6 module positively regulates leaf senescence. YDA-MKK4/MKK5-MPK3/MPK6 module regulates stomatal cell fate before the guard mother cell (GMC) is specified. When activated, reinforces the feedback loop by phosphorylating BASL, and inhibits stomatal fate by phosphorylating SPCH (PubMed:25843888). This MAPK cascade also functions downstream of the ER receptor in regulating coordinated local cell proliferation, which shapes the morphology of plant organs.</text>
</comment>
<comment type="catalytic activity">
    <reaction evidence="4 5 6 7 8 10 12 15 16">
        <text>L-seryl-[protein] + ATP = O-phospho-L-seryl-[protein] + ADP + H(+)</text>
        <dbReference type="Rhea" id="RHEA:17989"/>
        <dbReference type="Rhea" id="RHEA-COMP:9863"/>
        <dbReference type="Rhea" id="RHEA-COMP:11604"/>
        <dbReference type="ChEBI" id="CHEBI:15378"/>
        <dbReference type="ChEBI" id="CHEBI:29999"/>
        <dbReference type="ChEBI" id="CHEBI:30616"/>
        <dbReference type="ChEBI" id="CHEBI:83421"/>
        <dbReference type="ChEBI" id="CHEBI:456216"/>
        <dbReference type="EC" id="2.7.11.24"/>
    </reaction>
</comment>
<comment type="catalytic activity">
    <reaction evidence="4 5 6 7 8 10 12 15 16">
        <text>L-threonyl-[protein] + ATP = O-phospho-L-threonyl-[protein] + ADP + H(+)</text>
        <dbReference type="Rhea" id="RHEA:46608"/>
        <dbReference type="Rhea" id="RHEA-COMP:11060"/>
        <dbReference type="Rhea" id="RHEA-COMP:11605"/>
        <dbReference type="ChEBI" id="CHEBI:15378"/>
        <dbReference type="ChEBI" id="CHEBI:30013"/>
        <dbReference type="ChEBI" id="CHEBI:30616"/>
        <dbReference type="ChEBI" id="CHEBI:61977"/>
        <dbReference type="ChEBI" id="CHEBI:456216"/>
        <dbReference type="EC" id="2.7.11.24"/>
    </reaction>
</comment>
<comment type="activity regulation">
    <text evidence="4 5 6 7 8 10 12 14 15 16 20 21 22 23 24 26 28 31 36 44 45">Activated by threonine and tyrosine phosphorylation. Activated by the MAP kinase kinases MKK2, MKK3, MKK4, MKK5, MKK7 and MKK9. Activated in response to touch, wounding, low temperature, low humidity, salt stress, hydrogen peroxide, ozone, ACC (an ethylene precursor), jasmonic acid (JA), mastoparan and UVC. Activated in response to elicitors: oligogalacturonides, hexameric chitin fragments, fungal xylanase, and the bacterial flagellin and harpin. Activated upon Pseudomonas syringae pv. tomato DC3000 infection. Repressed by the protein phosphatase 2C AP2C1 and the protein-tyrosine-phosphatases MKP1 and PTP1. Repressed by DSPTP1B/MKP2-mediated dephosphorylation. Activated by polarized BASL (PubMed:27746029). Triggered by MKKK20 in response to various abiotic stresses, including osmotic stress, cold and reactive oxygen species (ROS) (PubMed:21969089). Activated by MKK5 in response to abscisic acid (ABA) (PubMed:27913741).</text>
</comment>
<comment type="subunit">
    <text evidence="11 15 23 30 31 32 33 34 38 39 40 41 42 45 47">Interacts with MEKK1, MKK1 and MKK2. May form a ternary complex with MEKK1 and MKK1 or MKK2. Interacts with NDPK2, AP2C1, MKP1 and PTP1. Interacts with DSPTP1B/MKP2, especially during HR-like responses triggered by fungal elicitors. Interacts with MKK4, MKK5 and MKK6 (PubMed:12506203, PubMed:15225555, PubMed:17630279, PubMed:19513235, PubMed:19789277, PubMed:20626661, PubMed:21057191, PubMed:21575092, PubMed:27913741). Binds to LIP5 (PubMed:25010425). Interacts with VQ4 and IKU1/VQ14 (PubMed:24750137). Interacts with RACK1A, RACK1B and RACK1C (PubMed:25731164). Interacts with PTP1 (PubMed:27029354). Interacts with FLZ9 (Ref.48). Binds to BASL and YDA (PubMed:25843888).</text>
</comment>
<comment type="interaction">
    <interactant intactId="EBI-349548">
        <id>Q39026</id>
    </interactant>
    <interactant intactId="EBI-16897073">
        <id>O80871</id>
        <label>At2g30020</label>
    </interactant>
    <organismsDiffer>false</organismsDiffer>
    <experiments>3</experiments>
</comment>
<comment type="interaction">
    <interactant intactId="EBI-349548">
        <id>Q39026</id>
    </interactant>
    <interactant intactId="EBI-4436376">
        <id>O80719</id>
        <label>At2g47060</label>
    </interactant>
    <organismsDiffer>false</organismsDiffer>
    <experiments>3</experiments>
</comment>
<comment type="interaction">
    <interactant intactId="EBI-349548">
        <id>Q39026</id>
    </interactant>
    <interactant intactId="EBI-25510874">
        <id>Q84JD1</id>
        <label>At5g07260</label>
    </interactant>
    <organismsDiffer>false</organismsDiffer>
    <experiments>4</experiments>
</comment>
<comment type="interaction">
    <interactant intactId="EBI-349548">
        <id>Q39026</id>
    </interactant>
    <interactant intactId="EBI-4441630">
        <id>Q8VZG1</id>
        <label>DGK3</label>
    </interactant>
    <organismsDiffer>false</organismsDiffer>
    <experiments>4</experiments>
</comment>
<comment type="interaction">
    <interactant intactId="EBI-349548">
        <id>Q39026</id>
    </interactant>
    <interactant intactId="EBI-2360943">
        <id>Q9FKG1</id>
        <label>ERF104</label>
    </interactant>
    <organismsDiffer>false</organismsDiffer>
    <experiments>3</experiments>
</comment>
<comment type="interaction">
    <interactant intactId="EBI-349548">
        <id>Q39026</id>
    </interactant>
    <interactant intactId="EBI-994350">
        <id>Q9S7U9</id>
        <label>MKK2</label>
    </interactant>
    <organismsDiffer>false</organismsDiffer>
    <experiments>8</experiments>
</comment>
<comment type="interaction">
    <interactant intactId="EBI-349548">
        <id>Q39026</id>
    </interactant>
    <interactant intactId="EBI-2358409">
        <id>O80397</id>
        <label>MKK4</label>
    </interactant>
    <organismsDiffer>false</organismsDiffer>
    <experiments>7</experiments>
</comment>
<comment type="interaction">
    <interactant intactId="EBI-349548">
        <id>Q39026</id>
    </interactant>
    <interactant intactId="EBI-2358458">
        <id>Q8RXG3</id>
        <label>MKK5</label>
    </interactant>
    <organismsDiffer>false</organismsDiffer>
    <experiments>4</experiments>
</comment>
<comment type="interaction">
    <interactant intactId="EBI-349548">
        <id>Q39026</id>
    </interactant>
    <interactant intactId="EBI-1238868">
        <id>Q9FJV0</id>
        <label>MKK6</label>
    </interactant>
    <organismsDiffer>false</organismsDiffer>
    <experiments>5</experiments>
</comment>
<comment type="interaction">
    <interactant intactId="EBI-349548">
        <id>Q39026</id>
    </interactant>
    <interactant intactId="EBI-4474106">
        <id>Q9M0J5</id>
        <label>MYB41</label>
    </interactant>
    <organismsDiffer>false</organismsDiffer>
    <experiments>2</experiments>
</comment>
<comment type="interaction">
    <interactant intactId="EBI-349548">
        <id>Q39026</id>
    </interactant>
    <interactant intactId="EBI-4451593">
        <id>Q9LPW3</id>
        <label>SCRM2</label>
    </interactant>
    <organismsDiffer>false</organismsDiffer>
    <experiments>4</experiments>
</comment>
<comment type="subcellular location">
    <subcellularLocation>
        <location>Cytoplasm</location>
    </subcellularLocation>
    <subcellularLocation>
        <location evidence="46">Nucleus</location>
    </subcellularLocation>
    <subcellularLocation>
        <location evidence="41">Cytoplasm</location>
        <location evidence="41">Cell cortex</location>
    </subcellularLocation>
    <text evidence="41 44 49">Translocated into the nucleus in response to phosphorylation (Probable). Recruited by BASL at the cell cortex in a polarized manner (PubMed:25843888). Mobility in stomatal lineage ground cells (SLGCs) is triggered by BASL, increased in response to hydrogen peroxide H(2)O(2), but repressed by U0126 (PubMed:27746029).</text>
</comment>
<comment type="developmental stage">
    <text evidence="44">Copolarizes with BASL, YDA and MPK3 in stomatal asymmetric cell division (ACD) cells.</text>
</comment>
<comment type="induction">
    <text evidence="35">By Alternaria brassicae pathogen infection.</text>
</comment>
<comment type="domain">
    <text>The TXY motif contains the threonine and tyrosine residues whose phosphorylation activates the MAP kinases.</text>
</comment>
<comment type="PTM">
    <text evidence="4 6">Dually phosphorylated on Thr-221 and Tyr-223, which activates the enzyme. Dephosphorylated by DSPTP1B/MKP2.</text>
</comment>
<comment type="disruption phenotype">
    <text evidence="28 29 45">Reduced sensitivity to abscisic acid (ABA) during germination. Insensitivity to ABA in terms of root growth inhibition (e.g. root cell division and elongation) and stomatal response leading to increased water loss under dehydrated conditions (PubMed:27913741). Delayed senescence phenotype.</text>
</comment>
<comment type="similarity">
    <text evidence="1 49">Belongs to the protein kinase superfamily. CMGC Ser/Thr protein kinase family. MAP kinase subfamily.</text>
</comment>
<feature type="chain" id="PRO_0000186315" description="Mitogen-activated protein kinase 6">
    <location>
        <begin position="1"/>
        <end position="395"/>
    </location>
</feature>
<feature type="domain" description="Protein kinase" evidence="1">
    <location>
        <begin position="63"/>
        <end position="348"/>
    </location>
</feature>
<feature type="region of interest" description="Disordered" evidence="3">
    <location>
        <begin position="1"/>
        <end position="35"/>
    </location>
</feature>
<feature type="short sequence motif" description="TXY">
    <location>
        <begin position="221"/>
        <end position="223"/>
    </location>
</feature>
<feature type="compositionally biased region" description="Low complexity" evidence="3">
    <location>
        <begin position="17"/>
        <end position="27"/>
    </location>
</feature>
<feature type="active site" description="Proton acceptor" evidence="1 2">
    <location>
        <position position="189"/>
    </location>
</feature>
<feature type="binding site" evidence="1">
    <location>
        <begin position="69"/>
        <end position="77"/>
    </location>
    <ligand>
        <name>ATP</name>
        <dbReference type="ChEBI" id="CHEBI:30616"/>
    </ligand>
</feature>
<feature type="binding site" evidence="1">
    <location>
        <position position="92"/>
    </location>
    <ligand>
        <name>ATP</name>
        <dbReference type="ChEBI" id="CHEBI:30616"/>
    </ligand>
</feature>
<feature type="modified residue" description="Phosphothreonine" evidence="4">
    <location>
        <position position="221"/>
    </location>
</feature>
<feature type="modified residue" description="Phosphotyrosine" evidence="4">
    <location>
        <position position="223"/>
    </location>
</feature>
<feature type="modified residue" description="Phosphothreonine" evidence="52">
    <location>
        <position position="226"/>
    </location>
</feature>
<feature type="mutagenesis site" description="Loss of kinase activity." evidence="9">
    <original>K</original>
    <variation>M</variation>
    <location>
        <position position="92"/>
    </location>
</feature>
<feature type="mutagenesis site" description="Loss of kinase activity." evidence="9">
    <original>K</original>
    <variation>M</variation>
    <location>
        <position position="93"/>
    </location>
</feature>
<feature type="mutagenesis site" description="In MPK6_AEF; reduced mobility, impaired BASL-triggered mobility increase, and clustered stomata." evidence="44">
    <original>TEY</original>
    <variation>AEF</variation>
    <location>
        <begin position="221"/>
        <end position="223"/>
    </location>
</feature>
<feature type="mutagenesis site" description="Reduced kinase activity." evidence="43">
    <original>E</original>
    <variation>G</variation>
    <location>
        <position position="289"/>
    </location>
</feature>
<feature type="mutagenesis site" description="Increased kinase activity, and confers the ability to induce ethylene and leaf senescence." evidence="43">
    <original>F</original>
    <variation>L</variation>
    <location>
        <position position="364"/>
    </location>
</feature>
<feature type="mutagenesis site" description="Increased kinase activity." evidence="43">
    <original>F</original>
    <variation>L</variation>
    <location>
        <position position="366"/>
    </location>
</feature>
<feature type="mutagenesis site" description="Increased kinase activity, and confers the ability to induce ethylene and leaf senescence." evidence="43">
    <original>F</original>
    <variation>L</variation>
    <location>
        <position position="368"/>
    </location>
</feature>
<feature type="strand" evidence="53">
    <location>
        <begin position="34"/>
        <end position="36"/>
    </location>
</feature>
<feature type="strand" evidence="54">
    <location>
        <begin position="38"/>
        <end position="41"/>
    </location>
</feature>
<feature type="turn" evidence="54">
    <location>
        <begin position="42"/>
        <end position="45"/>
    </location>
</feature>
<feature type="strand" evidence="54">
    <location>
        <begin position="46"/>
        <end position="51"/>
    </location>
</feature>
<feature type="strand" evidence="54">
    <location>
        <begin position="54"/>
        <end position="59"/>
    </location>
</feature>
<feature type="strand" evidence="54">
    <location>
        <begin position="67"/>
        <end position="82"/>
    </location>
</feature>
<feature type="turn" evidence="54">
    <location>
        <begin position="83"/>
        <end position="86"/>
    </location>
</feature>
<feature type="strand" evidence="54">
    <location>
        <begin position="87"/>
        <end position="94"/>
    </location>
</feature>
<feature type="turn" evidence="54">
    <location>
        <begin position="95"/>
        <end position="98"/>
    </location>
</feature>
<feature type="helix" evidence="54">
    <location>
        <begin position="101"/>
        <end position="116"/>
    </location>
</feature>
<feature type="strand" evidence="54">
    <location>
        <begin position="125"/>
        <end position="128"/>
    </location>
</feature>
<feature type="strand" evidence="54">
    <location>
        <begin position="132"/>
        <end position="136"/>
    </location>
</feature>
<feature type="strand" evidence="54">
    <location>
        <begin position="140"/>
        <end position="145"/>
    </location>
</feature>
<feature type="strand" evidence="54">
    <location>
        <begin position="148"/>
        <end position="150"/>
    </location>
</feature>
<feature type="helix" evidence="54">
    <location>
        <begin position="151"/>
        <end position="156"/>
    </location>
</feature>
<feature type="helix" evidence="54">
    <location>
        <begin position="163"/>
        <end position="182"/>
    </location>
</feature>
<feature type="helix" evidence="54">
    <location>
        <begin position="192"/>
        <end position="194"/>
    </location>
</feature>
<feature type="strand" evidence="54">
    <location>
        <begin position="195"/>
        <end position="197"/>
    </location>
</feature>
<feature type="strand" evidence="54">
    <location>
        <begin position="203"/>
        <end position="205"/>
    </location>
</feature>
<feature type="helix" evidence="54">
    <location>
        <begin position="219"/>
        <end position="223"/>
    </location>
</feature>
<feature type="helix" evidence="54">
    <location>
        <begin position="232"/>
        <end position="235"/>
    </location>
</feature>
<feature type="helix" evidence="54">
    <location>
        <begin position="244"/>
        <end position="259"/>
    </location>
</feature>
<feature type="helix" evidence="54">
    <location>
        <begin position="269"/>
        <end position="280"/>
    </location>
</feature>
<feature type="strand" evidence="54">
    <location>
        <begin position="285"/>
        <end position="291"/>
    </location>
</feature>
<feature type="helix" evidence="54">
    <location>
        <begin position="293"/>
        <end position="300"/>
    </location>
</feature>
<feature type="helix" evidence="54">
    <location>
        <begin position="310"/>
        <end position="313"/>
    </location>
</feature>
<feature type="helix" evidence="54">
    <location>
        <begin position="319"/>
        <end position="328"/>
    </location>
</feature>
<feature type="helix" evidence="54">
    <location>
        <begin position="333"/>
        <end position="335"/>
    </location>
</feature>
<feature type="helix" evidence="54">
    <location>
        <begin position="339"/>
        <end position="344"/>
    </location>
</feature>
<feature type="helix" evidence="54">
    <location>
        <begin position="346"/>
        <end position="348"/>
    </location>
</feature>
<feature type="turn" evidence="54">
    <location>
        <begin position="349"/>
        <end position="351"/>
    </location>
</feature>
<feature type="helix" evidence="54">
    <location>
        <begin position="354"/>
        <end position="356"/>
    </location>
</feature>
<feature type="strand" evidence="54">
    <location>
        <begin position="368"/>
        <end position="372"/>
    </location>
</feature>
<feature type="helix" evidence="54">
    <location>
        <begin position="375"/>
        <end position="389"/>
    </location>
</feature>
<feature type="helix" evidence="54">
    <location>
        <begin position="391"/>
        <end position="393"/>
    </location>
</feature>
<dbReference type="EC" id="2.7.11.24" evidence="1 4 5 6"/>
<dbReference type="EMBL" id="D21842">
    <property type="protein sequence ID" value="BAA04869.1"/>
    <property type="molecule type" value="mRNA"/>
</dbReference>
<dbReference type="EMBL" id="AC002333">
    <property type="protein sequence ID" value="AAB64027.1"/>
    <property type="molecule type" value="Genomic_DNA"/>
</dbReference>
<dbReference type="EMBL" id="CP002685">
    <property type="protein sequence ID" value="AEC10325.1"/>
    <property type="molecule type" value="Genomic_DNA"/>
</dbReference>
<dbReference type="EMBL" id="AY120737">
    <property type="protein sequence ID" value="AAM53295.1"/>
    <property type="molecule type" value="mRNA"/>
</dbReference>
<dbReference type="EMBL" id="BT008855">
    <property type="protein sequence ID" value="AAP68294.1"/>
    <property type="molecule type" value="mRNA"/>
</dbReference>
<dbReference type="PIR" id="S40472">
    <property type="entry name" value="S40472"/>
</dbReference>
<dbReference type="RefSeq" id="NP_181907.1">
    <property type="nucleotide sequence ID" value="NM_129941.4"/>
</dbReference>
<dbReference type="PDB" id="5CI6">
    <property type="method" value="X-ray"/>
    <property type="resolution" value="3.00 A"/>
    <property type="chains" value="A/B=29-395"/>
</dbReference>
<dbReference type="PDB" id="6DTL">
    <property type="method" value="X-ray"/>
    <property type="resolution" value="2.75 A"/>
    <property type="chains" value="A/B=32-395"/>
</dbReference>
<dbReference type="PDBsum" id="5CI6"/>
<dbReference type="PDBsum" id="6DTL"/>
<dbReference type="SMR" id="Q39026"/>
<dbReference type="BioGRID" id="4318">
    <property type="interactions" value="218"/>
</dbReference>
<dbReference type="DIP" id="DIP-31825N"/>
<dbReference type="ELM" id="Q39026"/>
<dbReference type="FunCoup" id="Q39026">
    <property type="interactions" value="4101"/>
</dbReference>
<dbReference type="IntAct" id="Q39026">
    <property type="interactions" value="17"/>
</dbReference>
<dbReference type="MINT" id="Q39026"/>
<dbReference type="STRING" id="3702.Q39026"/>
<dbReference type="iPTMnet" id="Q39026"/>
<dbReference type="PaxDb" id="3702-AT2G43790.1"/>
<dbReference type="ProteomicsDB" id="238273"/>
<dbReference type="EnsemblPlants" id="AT2G43790.1">
    <property type="protein sequence ID" value="AT2G43790.1"/>
    <property type="gene ID" value="AT2G43790"/>
</dbReference>
<dbReference type="GeneID" id="818982"/>
<dbReference type="Gramene" id="AT2G43790.1">
    <property type="protein sequence ID" value="AT2G43790.1"/>
    <property type="gene ID" value="AT2G43790"/>
</dbReference>
<dbReference type="KEGG" id="ath:AT2G43790"/>
<dbReference type="Araport" id="AT2G43790"/>
<dbReference type="TAIR" id="AT2G43790">
    <property type="gene designation" value="MPK6"/>
</dbReference>
<dbReference type="eggNOG" id="KOG0660">
    <property type="taxonomic scope" value="Eukaryota"/>
</dbReference>
<dbReference type="HOGENOM" id="CLU_000288_181_1_1"/>
<dbReference type="InParanoid" id="Q39026"/>
<dbReference type="OMA" id="CYFLYQM"/>
<dbReference type="OrthoDB" id="192887at2759"/>
<dbReference type="PhylomeDB" id="Q39026"/>
<dbReference type="BRENDA" id="2.7.11.24">
    <property type="organism ID" value="399"/>
</dbReference>
<dbReference type="EvolutionaryTrace" id="Q39026"/>
<dbReference type="PRO" id="PR:Q39026"/>
<dbReference type="Proteomes" id="UP000006548">
    <property type="component" value="Chromosome 2"/>
</dbReference>
<dbReference type="ExpressionAtlas" id="Q39026">
    <property type="expression patterns" value="baseline and differential"/>
</dbReference>
<dbReference type="GO" id="GO:0005938">
    <property type="term" value="C:cell cortex"/>
    <property type="evidence" value="ECO:0000314"/>
    <property type="project" value="UniProtKB"/>
</dbReference>
<dbReference type="GO" id="GO:0005829">
    <property type="term" value="C:cytosol"/>
    <property type="evidence" value="ECO:0007005"/>
    <property type="project" value="TAIR"/>
</dbReference>
<dbReference type="GO" id="GO:0005634">
    <property type="term" value="C:nucleus"/>
    <property type="evidence" value="ECO:0007669"/>
    <property type="project" value="UniProtKB-SubCell"/>
</dbReference>
<dbReference type="GO" id="GO:0009524">
    <property type="term" value="C:phragmoplast"/>
    <property type="evidence" value="ECO:0000314"/>
    <property type="project" value="TAIR"/>
</dbReference>
<dbReference type="GO" id="GO:0009574">
    <property type="term" value="C:preprophase band"/>
    <property type="evidence" value="ECO:0000314"/>
    <property type="project" value="TAIR"/>
</dbReference>
<dbReference type="GO" id="GO:0005802">
    <property type="term" value="C:trans-Golgi network"/>
    <property type="evidence" value="ECO:0000314"/>
    <property type="project" value="TAIR"/>
</dbReference>
<dbReference type="GO" id="GO:0005524">
    <property type="term" value="F:ATP binding"/>
    <property type="evidence" value="ECO:0007669"/>
    <property type="project" value="UniProtKB-KW"/>
</dbReference>
<dbReference type="GO" id="GO:0004707">
    <property type="term" value="F:MAP kinase activity"/>
    <property type="evidence" value="ECO:0000314"/>
    <property type="project" value="TAIR"/>
</dbReference>
<dbReference type="GO" id="GO:0019902">
    <property type="term" value="F:phosphatase binding"/>
    <property type="evidence" value="ECO:0000353"/>
    <property type="project" value="UniProtKB"/>
</dbReference>
<dbReference type="GO" id="GO:0004672">
    <property type="term" value="F:protein kinase activity"/>
    <property type="evidence" value="ECO:0000314"/>
    <property type="project" value="TAIR"/>
</dbReference>
<dbReference type="GO" id="GO:0106310">
    <property type="term" value="F:protein serine kinase activity"/>
    <property type="evidence" value="ECO:0007669"/>
    <property type="project" value="RHEA"/>
</dbReference>
<dbReference type="GO" id="GO:0009738">
    <property type="term" value="P:abscisic acid-activated signaling pathway"/>
    <property type="evidence" value="ECO:0000315"/>
    <property type="project" value="UniProtKB"/>
</dbReference>
<dbReference type="GO" id="GO:0010120">
    <property type="term" value="P:camalexin biosynthetic process"/>
    <property type="evidence" value="ECO:0000315"/>
    <property type="project" value="TAIR"/>
</dbReference>
<dbReference type="GO" id="GO:0051301">
    <property type="term" value="P:cell division"/>
    <property type="evidence" value="ECO:0000315"/>
    <property type="project" value="UniProtKB"/>
</dbReference>
<dbReference type="GO" id="GO:0042742">
    <property type="term" value="P:defense response to bacterium"/>
    <property type="evidence" value="ECO:0000270"/>
    <property type="project" value="TAIR"/>
</dbReference>
<dbReference type="GO" id="GO:0009864">
    <property type="term" value="P:induced systemic resistance, jasmonic acid mediated signaling pathway"/>
    <property type="evidence" value="ECO:0000315"/>
    <property type="project" value="TAIR"/>
</dbReference>
<dbReference type="GO" id="GO:0010229">
    <property type="term" value="P:inflorescence development"/>
    <property type="evidence" value="ECO:0000315"/>
    <property type="project" value="TAIR"/>
</dbReference>
<dbReference type="GO" id="GO:0010150">
    <property type="term" value="P:leaf senescence"/>
    <property type="evidence" value="ECO:0000315"/>
    <property type="project" value="UniProtKB"/>
</dbReference>
<dbReference type="GO" id="GO:0048481">
    <property type="term" value="P:plant ovule development"/>
    <property type="evidence" value="ECO:0000316"/>
    <property type="project" value="TAIR"/>
</dbReference>
<dbReference type="GO" id="GO:0009626">
    <property type="term" value="P:plant-type hypersensitive response"/>
    <property type="evidence" value="ECO:0007669"/>
    <property type="project" value="UniProtKB-KW"/>
</dbReference>
<dbReference type="GO" id="GO:0009555">
    <property type="term" value="P:pollen development"/>
    <property type="evidence" value="ECO:0000316"/>
    <property type="project" value="TAIR"/>
</dbReference>
<dbReference type="GO" id="GO:0010183">
    <property type="term" value="P:pollen tube guidance"/>
    <property type="evidence" value="ECO:0000316"/>
    <property type="project" value="TAIR"/>
</dbReference>
<dbReference type="GO" id="GO:0080136">
    <property type="term" value="P:priming of cellular response to stress"/>
    <property type="evidence" value="ECO:0000315"/>
    <property type="project" value="TAIR"/>
</dbReference>
<dbReference type="GO" id="GO:0006468">
    <property type="term" value="P:protein phosphorylation"/>
    <property type="evidence" value="ECO:0000314"/>
    <property type="project" value="TAIR"/>
</dbReference>
<dbReference type="GO" id="GO:0010082">
    <property type="term" value="P:regulation of root meristem growth"/>
    <property type="evidence" value="ECO:0000315"/>
    <property type="project" value="UniProtKB"/>
</dbReference>
<dbReference type="GO" id="GO:0090333">
    <property type="term" value="P:regulation of stomatal closure"/>
    <property type="evidence" value="ECO:0000315"/>
    <property type="project" value="UniProtKB"/>
</dbReference>
<dbReference type="GO" id="GO:0051510">
    <property type="term" value="P:regulation of unidimensional cell growth"/>
    <property type="evidence" value="ECO:0000315"/>
    <property type="project" value="UniProtKB"/>
</dbReference>
<dbReference type="GO" id="GO:0009737">
    <property type="term" value="P:response to abscisic acid"/>
    <property type="evidence" value="ECO:0000270"/>
    <property type="project" value="TAIR"/>
</dbReference>
<dbReference type="GO" id="GO:0009409">
    <property type="term" value="P:response to cold"/>
    <property type="evidence" value="ECO:0000314"/>
    <property type="project" value="TAIR"/>
</dbReference>
<dbReference type="GO" id="GO:0009723">
    <property type="term" value="P:response to ethylene"/>
    <property type="evidence" value="ECO:0000314"/>
    <property type="project" value="TAIR"/>
</dbReference>
<dbReference type="GO" id="GO:0050826">
    <property type="term" value="P:response to freezing"/>
    <property type="evidence" value="ECO:0000315"/>
    <property type="project" value="TAIR"/>
</dbReference>
<dbReference type="GO" id="GO:0009620">
    <property type="term" value="P:response to fungus"/>
    <property type="evidence" value="ECO:0000270"/>
    <property type="project" value="UniProtKB"/>
</dbReference>
<dbReference type="GO" id="GO:0042542">
    <property type="term" value="P:response to hydrogen peroxide"/>
    <property type="evidence" value="ECO:0000314"/>
    <property type="project" value="TAIR"/>
</dbReference>
<dbReference type="GO" id="GO:1902065">
    <property type="term" value="P:response to L-glutamate"/>
    <property type="evidence" value="ECO:0000314"/>
    <property type="project" value="TAIR"/>
</dbReference>
<dbReference type="GO" id="GO:0006970">
    <property type="term" value="P:response to osmotic stress"/>
    <property type="evidence" value="ECO:0000314"/>
    <property type="project" value="TAIR"/>
</dbReference>
<dbReference type="GO" id="GO:0006979">
    <property type="term" value="P:response to oxidative stress"/>
    <property type="evidence" value="ECO:0000270"/>
    <property type="project" value="TAIR"/>
</dbReference>
<dbReference type="GO" id="GO:0000302">
    <property type="term" value="P:response to reactive oxygen species"/>
    <property type="evidence" value="ECO:0000270"/>
    <property type="project" value="TAIR"/>
</dbReference>
<dbReference type="GO" id="GO:0009651">
    <property type="term" value="P:response to salt stress"/>
    <property type="evidence" value="ECO:0000316"/>
    <property type="project" value="TAIR"/>
</dbReference>
<dbReference type="GO" id="GO:0010224">
    <property type="term" value="P:response to UV-B"/>
    <property type="evidence" value="ECO:0000315"/>
    <property type="project" value="TAIR"/>
</dbReference>
<dbReference type="GO" id="GO:0048364">
    <property type="term" value="P:root development"/>
    <property type="evidence" value="ECO:0000315"/>
    <property type="project" value="TAIR"/>
</dbReference>
<dbReference type="CDD" id="cd07858">
    <property type="entry name" value="STKc_TEY_MAPK"/>
    <property type="match status" value="1"/>
</dbReference>
<dbReference type="DisProt" id="DP02631"/>
<dbReference type="FunFam" id="1.10.510.10:FF:000013">
    <property type="entry name" value="Mitogen-activated protein kinase"/>
    <property type="match status" value="1"/>
</dbReference>
<dbReference type="FunFam" id="3.30.200.20:FF:000046">
    <property type="entry name" value="Mitogen-activated protein kinase"/>
    <property type="match status" value="1"/>
</dbReference>
<dbReference type="Gene3D" id="3.30.200.20">
    <property type="entry name" value="Phosphorylase Kinase, domain 1"/>
    <property type="match status" value="1"/>
</dbReference>
<dbReference type="Gene3D" id="1.10.510.10">
    <property type="entry name" value="Transferase(Phosphotransferase) domain 1"/>
    <property type="match status" value="1"/>
</dbReference>
<dbReference type="InterPro" id="IPR011009">
    <property type="entry name" value="Kinase-like_dom_sf"/>
</dbReference>
<dbReference type="InterPro" id="IPR050117">
    <property type="entry name" value="MAP_kinase"/>
</dbReference>
<dbReference type="InterPro" id="IPR003527">
    <property type="entry name" value="MAP_kinase_CS"/>
</dbReference>
<dbReference type="InterPro" id="IPR000719">
    <property type="entry name" value="Prot_kinase_dom"/>
</dbReference>
<dbReference type="InterPro" id="IPR017441">
    <property type="entry name" value="Protein_kinase_ATP_BS"/>
</dbReference>
<dbReference type="InterPro" id="IPR008271">
    <property type="entry name" value="Ser/Thr_kinase_AS"/>
</dbReference>
<dbReference type="PANTHER" id="PTHR24055">
    <property type="entry name" value="MITOGEN-ACTIVATED PROTEIN KINASE"/>
    <property type="match status" value="1"/>
</dbReference>
<dbReference type="Pfam" id="PF00069">
    <property type="entry name" value="Pkinase"/>
    <property type="match status" value="1"/>
</dbReference>
<dbReference type="SMART" id="SM00220">
    <property type="entry name" value="S_TKc"/>
    <property type="match status" value="1"/>
</dbReference>
<dbReference type="SUPFAM" id="SSF56112">
    <property type="entry name" value="Protein kinase-like (PK-like)"/>
    <property type="match status" value="1"/>
</dbReference>
<dbReference type="PROSITE" id="PS01351">
    <property type="entry name" value="MAPK"/>
    <property type="match status" value="1"/>
</dbReference>
<dbReference type="PROSITE" id="PS00107">
    <property type="entry name" value="PROTEIN_KINASE_ATP"/>
    <property type="match status" value="1"/>
</dbReference>
<dbReference type="PROSITE" id="PS50011">
    <property type="entry name" value="PROTEIN_KINASE_DOM"/>
    <property type="match status" value="1"/>
</dbReference>
<dbReference type="PROSITE" id="PS00108">
    <property type="entry name" value="PROTEIN_KINASE_ST"/>
    <property type="match status" value="1"/>
</dbReference>
<sequence length="395" mass="45058">MDGGSGQPAADTEMTEAPGGFPAAAPSPQMPGIENIPATLSHGGRFIQYNIFGNIFEVTAKYKPPIMPIGKGAYGIVCSAMNSETNESVAIKKIANAFDNKIDAKRTLREIKLLRHMDHENIVAIRDIIPPPLRNAFNDVYIAYELMDTDLHQIIRSNQALSEEHCQYFLYQILRGLKYIHSANVLHRDLKPSNLLLNANCDLKICDFGLARVTSESDFMTEYVVTRWYRAPELLLNSSDYTAAIDVWSVGCIFMELMDRKPLFPGRDHVHQLRLLMELIGTPSEEELEFLNENAKRYIRQLPPYPRQSITDKFPTVHPLAIDLIEKMLTFDPRRRITVLDALAHPYLNSLHDISDEPECTIPFNFDFENHALSEEQMKELIYREALAFNPEYQQ</sequence>